<proteinExistence type="inferred from homology"/>
<dbReference type="EMBL" id="AB001488">
    <property type="protein sequence ID" value="BAA19349.1"/>
    <property type="molecule type" value="Genomic_DNA"/>
</dbReference>
<dbReference type="EMBL" id="AL009126">
    <property type="protein sequence ID" value="CAB12320.1"/>
    <property type="molecule type" value="Genomic_DNA"/>
</dbReference>
<dbReference type="PIR" id="D69777">
    <property type="entry name" value="D69777"/>
</dbReference>
<dbReference type="RefSeq" id="WP_010886417.1">
    <property type="nucleotide sequence ID" value="NZ_OZ025638.1"/>
</dbReference>
<dbReference type="SMR" id="P96659"/>
<dbReference type="FunCoup" id="P96659">
    <property type="interactions" value="8"/>
</dbReference>
<dbReference type="STRING" id="224308.BSU05130"/>
<dbReference type="PaxDb" id="224308-BSU05130"/>
<dbReference type="EnsemblBacteria" id="CAB12320">
    <property type="protein sequence ID" value="CAB12320"/>
    <property type="gene ID" value="BSU_05130"/>
</dbReference>
<dbReference type="GeneID" id="938120"/>
<dbReference type="KEGG" id="bsu:BSU05130"/>
<dbReference type="PATRIC" id="fig|224308.179.peg.547"/>
<dbReference type="eggNOG" id="COG1329">
    <property type="taxonomic scope" value="Bacteria"/>
</dbReference>
<dbReference type="InParanoid" id="P96659"/>
<dbReference type="OrthoDB" id="9786074at2"/>
<dbReference type="PhylomeDB" id="P96659"/>
<dbReference type="BioCyc" id="BSUB:BSU05130-MONOMER"/>
<dbReference type="Proteomes" id="UP000001570">
    <property type="component" value="Chromosome"/>
</dbReference>
<dbReference type="GO" id="GO:0009303">
    <property type="term" value="P:rRNA transcription"/>
    <property type="evidence" value="ECO:0000318"/>
    <property type="project" value="GO_Central"/>
</dbReference>
<dbReference type="FunFam" id="1.20.58.1290:FF:000002">
    <property type="entry name" value="Transcriptional regulator, CarD"/>
    <property type="match status" value="1"/>
</dbReference>
<dbReference type="FunFam" id="2.40.10.170:FF:000008">
    <property type="entry name" value="Transcriptional regulator, CarD"/>
    <property type="match status" value="1"/>
</dbReference>
<dbReference type="Gene3D" id="2.40.10.170">
    <property type="match status" value="1"/>
</dbReference>
<dbReference type="Gene3D" id="1.20.58.1290">
    <property type="entry name" value="CarD-like, C-terminal domain"/>
    <property type="match status" value="1"/>
</dbReference>
<dbReference type="InterPro" id="IPR003711">
    <property type="entry name" value="CarD-like/TRCF_RID"/>
</dbReference>
<dbReference type="InterPro" id="IPR036101">
    <property type="entry name" value="CarD-like/TRCF_RID_sf"/>
</dbReference>
<dbReference type="InterPro" id="IPR042215">
    <property type="entry name" value="CarD-like_C"/>
</dbReference>
<dbReference type="InterPro" id="IPR052531">
    <property type="entry name" value="CarD-like_regulator"/>
</dbReference>
<dbReference type="InterPro" id="IPR048792">
    <property type="entry name" value="CarD_C"/>
</dbReference>
<dbReference type="PANTHER" id="PTHR38447:SF1">
    <property type="entry name" value="RNA POLYMERASE-BINDING TRANSCRIPTION FACTOR CARD"/>
    <property type="match status" value="1"/>
</dbReference>
<dbReference type="PANTHER" id="PTHR38447">
    <property type="entry name" value="TRANSCRIPTION FACTOR YDEB-RELATED"/>
    <property type="match status" value="1"/>
</dbReference>
<dbReference type="Pfam" id="PF21095">
    <property type="entry name" value="CarD_C"/>
    <property type="match status" value="1"/>
</dbReference>
<dbReference type="Pfam" id="PF02559">
    <property type="entry name" value="CarD_TRCF_RID"/>
    <property type="match status" value="1"/>
</dbReference>
<dbReference type="SMART" id="SM01058">
    <property type="entry name" value="CarD_TRCF"/>
    <property type="match status" value="1"/>
</dbReference>
<dbReference type="SUPFAM" id="SSF141259">
    <property type="entry name" value="CarD-like"/>
    <property type="match status" value="1"/>
</dbReference>
<keyword id="KW-1185">Reference proteome</keyword>
<reference key="1">
    <citation type="submission" date="1997-03" db="EMBL/GenBank/DDBJ databases">
        <title>A 148 kbp sequence of the region between 35 and 47 degree of the Bacillus subtilis genome.</title>
        <authorList>
            <person name="Kasahara Y."/>
            <person name="Nakai S."/>
            <person name="Lee S."/>
            <person name="Sadaie Y."/>
            <person name="Ogasawara N."/>
        </authorList>
    </citation>
    <scope>NUCLEOTIDE SEQUENCE [GENOMIC DNA]</scope>
    <source>
        <strain>168</strain>
    </source>
</reference>
<reference key="2">
    <citation type="journal article" date="1997" name="Nature">
        <title>The complete genome sequence of the Gram-positive bacterium Bacillus subtilis.</title>
        <authorList>
            <person name="Kunst F."/>
            <person name="Ogasawara N."/>
            <person name="Moszer I."/>
            <person name="Albertini A.M."/>
            <person name="Alloni G."/>
            <person name="Azevedo V."/>
            <person name="Bertero M.G."/>
            <person name="Bessieres P."/>
            <person name="Bolotin A."/>
            <person name="Borchert S."/>
            <person name="Borriss R."/>
            <person name="Boursier L."/>
            <person name="Brans A."/>
            <person name="Braun M."/>
            <person name="Brignell S.C."/>
            <person name="Bron S."/>
            <person name="Brouillet S."/>
            <person name="Bruschi C.V."/>
            <person name="Caldwell B."/>
            <person name="Capuano V."/>
            <person name="Carter N.M."/>
            <person name="Choi S.-K."/>
            <person name="Codani J.-J."/>
            <person name="Connerton I.F."/>
            <person name="Cummings N.J."/>
            <person name="Daniel R.A."/>
            <person name="Denizot F."/>
            <person name="Devine K.M."/>
            <person name="Duesterhoeft A."/>
            <person name="Ehrlich S.D."/>
            <person name="Emmerson P.T."/>
            <person name="Entian K.-D."/>
            <person name="Errington J."/>
            <person name="Fabret C."/>
            <person name="Ferrari E."/>
            <person name="Foulger D."/>
            <person name="Fritz C."/>
            <person name="Fujita M."/>
            <person name="Fujita Y."/>
            <person name="Fuma S."/>
            <person name="Galizzi A."/>
            <person name="Galleron N."/>
            <person name="Ghim S.-Y."/>
            <person name="Glaser P."/>
            <person name="Goffeau A."/>
            <person name="Golightly E.J."/>
            <person name="Grandi G."/>
            <person name="Guiseppi G."/>
            <person name="Guy B.J."/>
            <person name="Haga K."/>
            <person name="Haiech J."/>
            <person name="Harwood C.R."/>
            <person name="Henaut A."/>
            <person name="Hilbert H."/>
            <person name="Holsappel S."/>
            <person name="Hosono S."/>
            <person name="Hullo M.-F."/>
            <person name="Itaya M."/>
            <person name="Jones L.-M."/>
            <person name="Joris B."/>
            <person name="Karamata D."/>
            <person name="Kasahara Y."/>
            <person name="Klaerr-Blanchard M."/>
            <person name="Klein C."/>
            <person name="Kobayashi Y."/>
            <person name="Koetter P."/>
            <person name="Koningstein G."/>
            <person name="Krogh S."/>
            <person name="Kumano M."/>
            <person name="Kurita K."/>
            <person name="Lapidus A."/>
            <person name="Lardinois S."/>
            <person name="Lauber J."/>
            <person name="Lazarevic V."/>
            <person name="Lee S.-M."/>
            <person name="Levine A."/>
            <person name="Liu H."/>
            <person name="Masuda S."/>
            <person name="Mauel C."/>
            <person name="Medigue C."/>
            <person name="Medina N."/>
            <person name="Mellado R.P."/>
            <person name="Mizuno M."/>
            <person name="Moestl D."/>
            <person name="Nakai S."/>
            <person name="Noback M."/>
            <person name="Noone D."/>
            <person name="O'Reilly M."/>
            <person name="Ogawa K."/>
            <person name="Ogiwara A."/>
            <person name="Oudega B."/>
            <person name="Park S.-H."/>
            <person name="Parro V."/>
            <person name="Pohl T.M."/>
            <person name="Portetelle D."/>
            <person name="Porwollik S."/>
            <person name="Prescott A.M."/>
            <person name="Presecan E."/>
            <person name="Pujic P."/>
            <person name="Purnelle B."/>
            <person name="Rapoport G."/>
            <person name="Rey M."/>
            <person name="Reynolds S."/>
            <person name="Rieger M."/>
            <person name="Rivolta C."/>
            <person name="Rocha E."/>
            <person name="Roche B."/>
            <person name="Rose M."/>
            <person name="Sadaie Y."/>
            <person name="Sato T."/>
            <person name="Scanlan E."/>
            <person name="Schleich S."/>
            <person name="Schroeter R."/>
            <person name="Scoffone F."/>
            <person name="Sekiguchi J."/>
            <person name="Sekowska A."/>
            <person name="Seror S.J."/>
            <person name="Serror P."/>
            <person name="Shin B.-S."/>
            <person name="Soldo B."/>
            <person name="Sorokin A."/>
            <person name="Tacconi E."/>
            <person name="Takagi T."/>
            <person name="Takahashi H."/>
            <person name="Takemaru K."/>
            <person name="Takeuchi M."/>
            <person name="Tamakoshi A."/>
            <person name="Tanaka T."/>
            <person name="Terpstra P."/>
            <person name="Tognoni A."/>
            <person name="Tosato V."/>
            <person name="Uchiyama S."/>
            <person name="Vandenbol M."/>
            <person name="Vannier F."/>
            <person name="Vassarotti A."/>
            <person name="Viari A."/>
            <person name="Wambutt R."/>
            <person name="Wedler E."/>
            <person name="Wedler H."/>
            <person name="Weitzenegger T."/>
            <person name="Winters P."/>
            <person name="Wipat A."/>
            <person name="Yamamoto H."/>
            <person name="Yamane K."/>
            <person name="Yasumoto K."/>
            <person name="Yata K."/>
            <person name="Yoshida K."/>
            <person name="Yoshikawa H.-F."/>
            <person name="Zumstein E."/>
            <person name="Yoshikawa H."/>
            <person name="Danchin A."/>
        </authorList>
    </citation>
    <scope>NUCLEOTIDE SEQUENCE [LARGE SCALE GENOMIC DNA]</scope>
    <source>
        <strain>168</strain>
    </source>
</reference>
<protein>
    <recommendedName>
        <fullName>Putative transcription factor YdeB</fullName>
    </recommendedName>
</protein>
<evidence type="ECO:0000305" key="1"/>
<accession>P96659</accession>
<accession>Q797I8</accession>
<gene>
    <name type="primary">ydeB</name>
    <name type="ordered locus">BSU05130</name>
</gene>
<sequence length="153" mass="17746">MFQIGDNIVYPMHGAGIIEAIEEKEFLEEKQQYYVIRMSISNMTVMIPTSKILSSNIRPVTDILALKHIMHIFQHGESDRLLPWKQRYKINTDKIKTGEIQEGAEVVRDLMRMKKEKALNASEKKMLDNAYEFLISELEVIKGITEKQIKSFG</sequence>
<organism>
    <name type="scientific">Bacillus subtilis (strain 168)</name>
    <dbReference type="NCBI Taxonomy" id="224308"/>
    <lineage>
        <taxon>Bacteria</taxon>
        <taxon>Bacillati</taxon>
        <taxon>Bacillota</taxon>
        <taxon>Bacilli</taxon>
        <taxon>Bacillales</taxon>
        <taxon>Bacillaceae</taxon>
        <taxon>Bacillus</taxon>
    </lineage>
</organism>
<comment type="similarity">
    <text evidence="1">Belongs to the CarD family.</text>
</comment>
<feature type="chain" id="PRO_0000381932" description="Putative transcription factor YdeB">
    <location>
        <begin position="1"/>
        <end position="153"/>
    </location>
</feature>
<name>YDEB_BACSU</name>